<gene>
    <name type="primary">cobH</name>
</gene>
<keyword id="KW-0002">3D-structure</keyword>
<keyword id="KW-0169">Cobalamin biosynthesis</keyword>
<keyword id="KW-0903">Direct protein sequencing</keyword>
<keyword id="KW-0413">Isomerase</keyword>
<comment type="function">
    <text evidence="2">Catalyzes the conversion of precorrin-8X to hydrogenobyrinate.</text>
</comment>
<comment type="catalytic activity">
    <reaction evidence="2">
        <text>precorrin-8X + 3 H(+) = hydrogenobyrinate</text>
        <dbReference type="Rhea" id="RHEA:22512"/>
        <dbReference type="ChEBI" id="CHEBI:15378"/>
        <dbReference type="ChEBI" id="CHEBI:58581"/>
        <dbReference type="ChEBI" id="CHEBI:77873"/>
        <dbReference type="EC" id="5.4.99.61"/>
    </reaction>
</comment>
<comment type="biophysicochemical properties">
    <kinetics>
        <KM evidence="2">0.91 uM for precorrin-8X</KM>
        <Vmax evidence="2">230.0 nmol/h/mg enzyme</Vmax>
    </kinetics>
</comment>
<comment type="pathway">
    <text>Cofactor biosynthesis; adenosylcobalamin biosynthesis; cob(II)yrinate a,c-diamide from precorrin-2 (aerobic route): step 8/10.</text>
</comment>
<comment type="subunit">
    <text evidence="1">Homodimer.</text>
</comment>
<comment type="similarity">
    <text evidence="3">Belongs to the CobH/CbiC family.</text>
</comment>
<comment type="caution">
    <text evidence="3">Was originally thought to originate from Pseudomonas denitrificans, but similarity searches show that the sequence is much closer to Sinorhizobium. The entry's taxonomy has been changed.</text>
</comment>
<name>COBH_SINSX</name>
<accession>P21638</accession>
<proteinExistence type="evidence at protein level"/>
<sequence>MPEYDYIRDGNAIYERSFAIIRAEADLSRFSEEEADLAVRMVHACGSVEATRQFVFSPDFVSSARAALKAGAPILCDAEMVAHGVTRARLPAGNEVICTLRDPRTPALAAEIGNTRSAAALKLWSERLAGSVVAIGNAPTALFFLLEMLRDGAPKPAAILGMPVGFVGAAESKDALAENSYGVPFAIVRGRLGGSAMTAAALNSLARPGL</sequence>
<evidence type="ECO:0000269" key="1">
    <source>
    </source>
</evidence>
<evidence type="ECO:0000269" key="2">
    <source>
    </source>
</evidence>
<evidence type="ECO:0000305" key="3"/>
<evidence type="ECO:0000305" key="4">
    <source>
    </source>
</evidence>
<evidence type="ECO:0007829" key="5">
    <source>
        <dbReference type="PDB" id="1F2V"/>
    </source>
</evidence>
<evidence type="ECO:0007829" key="6">
    <source>
        <dbReference type="PDB" id="1I1H"/>
    </source>
</evidence>
<organism>
    <name type="scientific">Sinorhizobium sp</name>
    <dbReference type="NCBI Taxonomy" id="42445"/>
    <lineage>
        <taxon>Bacteria</taxon>
        <taxon>Pseudomonadati</taxon>
        <taxon>Pseudomonadota</taxon>
        <taxon>Alphaproteobacteria</taxon>
        <taxon>Hyphomicrobiales</taxon>
        <taxon>Rhizobiaceae</taxon>
        <taxon>Sinorhizobium/Ensifer group</taxon>
        <taxon>Sinorhizobium</taxon>
    </lineage>
</organism>
<feature type="initiator methionine" description="Removed" evidence="2">
    <location>
        <position position="1"/>
    </location>
</feature>
<feature type="chain" id="PRO_0000135926" description="Precorrin-8X methylmutase">
    <location>
        <begin position="2"/>
        <end position="210"/>
    </location>
</feature>
<feature type="active site" description="Proton donor/acceptor" evidence="4">
    <location>
        <position position="43"/>
    </location>
</feature>
<feature type="binding site">
    <location>
        <position position="17"/>
    </location>
    <ligand>
        <name>substrate</name>
    </ligand>
</feature>
<feature type="binding site">
    <location>
        <position position="40"/>
    </location>
    <ligand>
        <name>substrate</name>
    </ligand>
</feature>
<feature type="helix" evidence="5">
    <location>
        <begin position="10"/>
        <end position="24"/>
    </location>
</feature>
<feature type="strand" evidence="6">
    <location>
        <begin position="28"/>
        <end position="30"/>
    </location>
</feature>
<feature type="helix" evidence="5">
    <location>
        <begin position="32"/>
        <end position="45"/>
    </location>
</feature>
<feature type="helix" evidence="5">
    <location>
        <begin position="48"/>
        <end position="53"/>
    </location>
</feature>
<feature type="strand" evidence="5">
    <location>
        <begin position="54"/>
        <end position="56"/>
    </location>
</feature>
<feature type="helix" evidence="5">
    <location>
        <begin position="60"/>
        <end position="69"/>
    </location>
</feature>
<feature type="strand" evidence="5">
    <location>
        <begin position="74"/>
        <end position="78"/>
    </location>
</feature>
<feature type="helix" evidence="5">
    <location>
        <begin position="79"/>
        <end position="84"/>
    </location>
</feature>
<feature type="helix" evidence="5">
    <location>
        <begin position="87"/>
        <end position="89"/>
    </location>
</feature>
<feature type="strand" evidence="5">
    <location>
        <begin position="96"/>
        <end position="98"/>
    </location>
</feature>
<feature type="helix" evidence="5">
    <location>
        <begin position="104"/>
        <end position="112"/>
    </location>
</feature>
<feature type="helix" evidence="5">
    <location>
        <begin position="116"/>
        <end position="119"/>
    </location>
</feature>
<feature type="helix" evidence="5">
    <location>
        <begin position="120"/>
        <end position="124"/>
    </location>
</feature>
<feature type="helix" evidence="5">
    <location>
        <begin position="125"/>
        <end position="128"/>
    </location>
</feature>
<feature type="strand" evidence="5">
    <location>
        <begin position="132"/>
        <end position="135"/>
    </location>
</feature>
<feature type="helix" evidence="5">
    <location>
        <begin position="139"/>
        <end position="150"/>
    </location>
</feature>
<feature type="strand" evidence="5">
    <location>
        <begin position="157"/>
        <end position="161"/>
    </location>
</feature>
<feature type="strand" evidence="5">
    <location>
        <begin position="165"/>
        <end position="168"/>
    </location>
</feature>
<feature type="helix" evidence="5">
    <location>
        <begin position="169"/>
        <end position="178"/>
    </location>
</feature>
<feature type="strand" evidence="5">
    <location>
        <begin position="185"/>
        <end position="188"/>
    </location>
</feature>
<feature type="helix" evidence="5">
    <location>
        <begin position="195"/>
        <end position="206"/>
    </location>
</feature>
<protein>
    <recommendedName>
        <fullName>Precorrin-8X methylmutase</fullName>
        <ecNumber>5.4.99.61</ecNumber>
    </recommendedName>
    <alternativeName>
        <fullName>HBA synthase</fullName>
    </alternativeName>
    <alternativeName>
        <fullName>Precorrin isomerase</fullName>
    </alternativeName>
</protein>
<dbReference type="EC" id="5.4.99.61"/>
<dbReference type="EMBL" id="M59301">
    <property type="protein sequence ID" value="AAA25796.1"/>
    <property type="molecule type" value="Genomic_DNA"/>
</dbReference>
<dbReference type="PDB" id="1F2V">
    <property type="method" value="X-ray"/>
    <property type="resolution" value="2.10 A"/>
    <property type="chains" value="A=2-210"/>
</dbReference>
<dbReference type="PDB" id="1I1H">
    <property type="method" value="X-ray"/>
    <property type="resolution" value="2.60 A"/>
    <property type="chains" value="A=2-210"/>
</dbReference>
<dbReference type="PDBsum" id="1F2V"/>
<dbReference type="PDBsum" id="1I1H"/>
<dbReference type="SMR" id="P21638"/>
<dbReference type="DrugBank" id="DB02460">
    <property type="generic name" value="Hydrogenobyrinic acid"/>
</dbReference>
<dbReference type="KEGG" id="ag:AAA25796"/>
<dbReference type="BioCyc" id="MetaCyc:MONOMER-115"/>
<dbReference type="SABIO-RK" id="P21638"/>
<dbReference type="UniPathway" id="UPA00148">
    <property type="reaction ID" value="UER00219"/>
</dbReference>
<dbReference type="EvolutionaryTrace" id="P21638"/>
<dbReference type="GO" id="GO:0016993">
    <property type="term" value="F:precorrin-8X methylmutase activity"/>
    <property type="evidence" value="ECO:0007669"/>
    <property type="project" value="UniProtKB-EC"/>
</dbReference>
<dbReference type="GO" id="GO:0009236">
    <property type="term" value="P:cobalamin biosynthetic process"/>
    <property type="evidence" value="ECO:0007669"/>
    <property type="project" value="UniProtKB-UniPathway"/>
</dbReference>
<dbReference type="Gene3D" id="3.40.50.10230">
    <property type="entry name" value="Cobalamin biosynthesis CobH/CbiC, precorrin-8X methylmutase"/>
    <property type="match status" value="1"/>
</dbReference>
<dbReference type="InterPro" id="IPR003722">
    <property type="entry name" value="Cbl_synth_CobH/CbiC"/>
</dbReference>
<dbReference type="InterPro" id="IPR036588">
    <property type="entry name" value="CobH/CbiC_sf"/>
</dbReference>
<dbReference type="NCBIfam" id="NF006136">
    <property type="entry name" value="PRK08285.1"/>
    <property type="match status" value="1"/>
</dbReference>
<dbReference type="PANTHER" id="PTHR43588">
    <property type="entry name" value="COBALT-PRECORRIN-8 METHYLMUTASE"/>
    <property type="match status" value="1"/>
</dbReference>
<dbReference type="PANTHER" id="PTHR43588:SF1">
    <property type="entry name" value="COBALT-PRECORRIN-8 METHYLMUTASE"/>
    <property type="match status" value="1"/>
</dbReference>
<dbReference type="Pfam" id="PF02570">
    <property type="entry name" value="CbiC"/>
    <property type="match status" value="1"/>
</dbReference>
<dbReference type="SUPFAM" id="SSF63965">
    <property type="entry name" value="Precorrin-8X methylmutase CbiC/CobH"/>
    <property type="match status" value="1"/>
</dbReference>
<reference key="1">
    <citation type="journal article" date="1990" name="J. Bacteriol.">
        <title>Genetic and sequence analysis of an 8.7-kilobase Pseudomonas denitrificans fragment carrying eight genes involved in transformation of precorrin-2 to cobyrinic acid.</title>
        <authorList>
            <person name="Crouzet J."/>
            <person name="Cameron B."/>
            <person name="Cauchois L."/>
            <person name="Rigault S."/>
            <person name="Rouyez M.-C."/>
            <person name="Blanche F."/>
            <person name="Thibaut D."/>
            <person name="Debussche L."/>
        </authorList>
    </citation>
    <scope>NUCLEOTIDE SEQUENCE [GENOMIC DNA]</scope>
    <source>
        <strain>SC510</strain>
    </source>
</reference>
<reference key="2">
    <citation type="journal article" date="1992" name="J. Bacteriol.">
        <title>The final step in the biosynthesis of hydrogenobyrinic acid is catalyzed by the cobH gene product with precorrin-8x as the substrate.</title>
        <authorList>
            <person name="Thibaut D."/>
            <person name="Couder M."/>
            <person name="Famechon A."/>
            <person name="Debussche L."/>
            <person name="Cameron B."/>
            <person name="Crouzet J."/>
            <person name="Blanche F."/>
        </authorList>
    </citation>
    <scope>PROTEIN SEQUENCE OF 2-18</scope>
    <scope>FUNCTION</scope>
    <scope>CATALYTIC ACTIVITY</scope>
    <scope>BIOPHYSICOCHEMICAL PROPERTIES</scope>
</reference>
<reference key="3">
    <citation type="journal article" date="2001" name="Structure">
        <title>Crystal structure of precorrin-8x methyl mutase.</title>
        <authorList>
            <person name="Shipman L.W."/>
            <person name="Li D."/>
            <person name="Roessner C.A."/>
            <person name="Scott A.I."/>
            <person name="Sacchettini J.C."/>
        </authorList>
    </citation>
    <scope>X-RAY CRYSTALLOGRAPHY (2.1 ANGSTROMS) OF 2-210 OF APOENZYME AND IN COMPLEX WITH HYDROGENOBYRINATE</scope>
    <scope>SUBUNIT</scope>
    <scope>ACTIVE SITE</scope>
    <scope>REACTION MECHANISM</scope>
</reference>